<keyword id="KW-0963">Cytoplasm</keyword>
<keyword id="KW-0312">Gluconeogenesis</keyword>
<keyword id="KW-0324">Glycolysis</keyword>
<keyword id="KW-0413">Isomerase</keyword>
<proteinExistence type="inferred from homology"/>
<dbReference type="EC" id="5.3.1.1" evidence="1"/>
<dbReference type="EMBL" id="CP000300">
    <property type="protein sequence ID" value="ABE52874.1"/>
    <property type="molecule type" value="Genomic_DNA"/>
</dbReference>
<dbReference type="RefSeq" id="WP_011500015.1">
    <property type="nucleotide sequence ID" value="NC_007955.1"/>
</dbReference>
<dbReference type="SMR" id="Q12UK2"/>
<dbReference type="STRING" id="259564.Mbur_1995"/>
<dbReference type="GeneID" id="3996947"/>
<dbReference type="KEGG" id="mbu:Mbur_1995"/>
<dbReference type="HOGENOM" id="CLU_104921_0_0_2"/>
<dbReference type="OrthoDB" id="9465at2157"/>
<dbReference type="BRENDA" id="5.3.1.1">
    <property type="organism ID" value="9200"/>
</dbReference>
<dbReference type="UniPathway" id="UPA00109">
    <property type="reaction ID" value="UER00189"/>
</dbReference>
<dbReference type="UniPathway" id="UPA00138"/>
<dbReference type="Proteomes" id="UP000001979">
    <property type="component" value="Chromosome"/>
</dbReference>
<dbReference type="GO" id="GO:0005737">
    <property type="term" value="C:cytoplasm"/>
    <property type="evidence" value="ECO:0007669"/>
    <property type="project" value="UniProtKB-SubCell"/>
</dbReference>
<dbReference type="GO" id="GO:0004807">
    <property type="term" value="F:triose-phosphate isomerase activity"/>
    <property type="evidence" value="ECO:0007669"/>
    <property type="project" value="UniProtKB-UniRule"/>
</dbReference>
<dbReference type="GO" id="GO:0006094">
    <property type="term" value="P:gluconeogenesis"/>
    <property type="evidence" value="ECO:0007669"/>
    <property type="project" value="UniProtKB-UniRule"/>
</dbReference>
<dbReference type="GO" id="GO:0006096">
    <property type="term" value="P:glycolytic process"/>
    <property type="evidence" value="ECO:0007669"/>
    <property type="project" value="UniProtKB-UniRule"/>
</dbReference>
<dbReference type="CDD" id="cd00311">
    <property type="entry name" value="TIM"/>
    <property type="match status" value="1"/>
</dbReference>
<dbReference type="FunFam" id="3.20.20.70:FF:000223">
    <property type="entry name" value="Triosephosphate isomerase"/>
    <property type="match status" value="1"/>
</dbReference>
<dbReference type="Gene3D" id="3.20.20.70">
    <property type="entry name" value="Aldolase class I"/>
    <property type="match status" value="1"/>
</dbReference>
<dbReference type="HAMAP" id="MF_00147_A">
    <property type="entry name" value="TIM_A"/>
    <property type="match status" value="1"/>
</dbReference>
<dbReference type="InterPro" id="IPR013785">
    <property type="entry name" value="Aldolase_TIM"/>
</dbReference>
<dbReference type="InterPro" id="IPR035990">
    <property type="entry name" value="TIM_sf"/>
</dbReference>
<dbReference type="InterPro" id="IPR000652">
    <property type="entry name" value="Triosephosphate_isomerase"/>
</dbReference>
<dbReference type="InterPro" id="IPR022891">
    <property type="entry name" value="Triosephosphate_isomerase_arc"/>
</dbReference>
<dbReference type="InterPro" id="IPR020861">
    <property type="entry name" value="Triosephosphate_isomerase_AS"/>
</dbReference>
<dbReference type="NCBIfam" id="NF003302">
    <property type="entry name" value="PRK04302.1"/>
    <property type="match status" value="1"/>
</dbReference>
<dbReference type="NCBIfam" id="TIGR00419">
    <property type="entry name" value="tim"/>
    <property type="match status" value="1"/>
</dbReference>
<dbReference type="Pfam" id="PF00121">
    <property type="entry name" value="TIM"/>
    <property type="match status" value="1"/>
</dbReference>
<dbReference type="SUPFAM" id="SSF51351">
    <property type="entry name" value="Triosephosphate isomerase (TIM)"/>
    <property type="match status" value="1"/>
</dbReference>
<dbReference type="PROSITE" id="PS00171">
    <property type="entry name" value="TIM_1"/>
    <property type="match status" value="1"/>
</dbReference>
<dbReference type="PROSITE" id="PS51440">
    <property type="entry name" value="TIM_2"/>
    <property type="match status" value="1"/>
</dbReference>
<evidence type="ECO:0000255" key="1">
    <source>
        <dbReference type="HAMAP-Rule" id="MF_00147"/>
    </source>
</evidence>
<gene>
    <name evidence="1" type="primary">tpiA</name>
    <name type="ordered locus">Mbur_1995</name>
</gene>
<name>TPIS_METBU</name>
<comment type="function">
    <text evidence="1">Involved in the gluconeogenesis. Catalyzes stereospecifically the conversion of dihydroxyacetone phosphate (DHAP) to D-glyceraldehyde-3-phosphate (G3P).</text>
</comment>
<comment type="catalytic activity">
    <reaction evidence="1">
        <text>D-glyceraldehyde 3-phosphate = dihydroxyacetone phosphate</text>
        <dbReference type="Rhea" id="RHEA:18585"/>
        <dbReference type="ChEBI" id="CHEBI:57642"/>
        <dbReference type="ChEBI" id="CHEBI:59776"/>
        <dbReference type="EC" id="5.3.1.1"/>
    </reaction>
</comment>
<comment type="pathway">
    <text evidence="1">Carbohydrate biosynthesis; gluconeogenesis.</text>
</comment>
<comment type="pathway">
    <text evidence="1">Carbohydrate degradation; glycolysis; D-glyceraldehyde 3-phosphate from glycerone phosphate: step 1/1.</text>
</comment>
<comment type="subunit">
    <text evidence="1">Homotetramer; dimer of dimers.</text>
</comment>
<comment type="subcellular location">
    <subcellularLocation>
        <location evidence="1">Cytoplasm</location>
    </subcellularLocation>
</comment>
<comment type="similarity">
    <text evidence="1">Belongs to the triosephosphate isomerase family.</text>
</comment>
<protein>
    <recommendedName>
        <fullName evidence="1">Triosephosphate isomerase</fullName>
        <shortName evidence="1">TIM</shortName>
        <shortName evidence="1">TPI</shortName>
        <ecNumber evidence="1">5.3.1.1</ecNumber>
    </recommendedName>
    <alternativeName>
        <fullName evidence="1">Triose-phosphate isomerase</fullName>
    </alternativeName>
</protein>
<reference key="1">
    <citation type="journal article" date="2009" name="ISME J.">
        <title>The genome sequence of the psychrophilic archaeon, Methanococcoides burtonii: the role of genome evolution in cold adaptation.</title>
        <authorList>
            <person name="Allen M.A."/>
            <person name="Lauro F.M."/>
            <person name="Williams T.J."/>
            <person name="Burg D."/>
            <person name="Siddiqui K.S."/>
            <person name="De Francisci D."/>
            <person name="Chong K.W."/>
            <person name="Pilak O."/>
            <person name="Chew H.H."/>
            <person name="De Maere M.Z."/>
            <person name="Ting L."/>
            <person name="Katrib M."/>
            <person name="Ng C."/>
            <person name="Sowers K.R."/>
            <person name="Galperin M.Y."/>
            <person name="Anderson I.J."/>
            <person name="Ivanova N."/>
            <person name="Dalin E."/>
            <person name="Martinez M."/>
            <person name="Lapidus A."/>
            <person name="Hauser L."/>
            <person name="Land M."/>
            <person name="Thomas T."/>
            <person name="Cavicchioli R."/>
        </authorList>
    </citation>
    <scope>NUCLEOTIDE SEQUENCE [LARGE SCALE GENOMIC DNA]</scope>
    <source>
        <strain>DSM 6242 / NBRC 107633 / OCM 468 / ACE-M</strain>
    </source>
</reference>
<feature type="chain" id="PRO_1000071490" description="Triosephosphate isomerase">
    <location>
        <begin position="1"/>
        <end position="221"/>
    </location>
</feature>
<feature type="active site" description="Electrophile" evidence="1">
    <location>
        <position position="92"/>
    </location>
</feature>
<feature type="active site" description="Proton acceptor" evidence="1">
    <location>
        <position position="140"/>
    </location>
</feature>
<feature type="binding site" evidence="1">
    <location>
        <begin position="8"/>
        <end position="10"/>
    </location>
    <ligand>
        <name>substrate</name>
    </ligand>
</feature>
<feature type="binding site" evidence="1">
    <location>
        <position position="145"/>
    </location>
    <ligand>
        <name>substrate</name>
    </ligand>
</feature>
<feature type="binding site" evidence="1">
    <location>
        <position position="180"/>
    </location>
    <ligand>
        <name>substrate</name>
    </ligand>
</feature>
<feature type="binding site" evidence="1">
    <location>
        <begin position="201"/>
        <end position="202"/>
    </location>
    <ligand>
        <name>substrate</name>
    </ligand>
</feature>
<accession>Q12UK2</accession>
<sequence length="221" mass="22472">MKPLIVLNLKTYLEGTGEGAVRIARACKEVGEASGIEIAIAPQFCDIYRVASQVDVPVYSQHLDGVGAGSFTGHAFAKCIKDAGAVGTLINHSECRLKLADIEASVTAAKGEGLRTIICTNNIATTAAAAALGPDYVAVEPPELIGSGIPVSKADPEVVTGSVAAVERIDPAVKVLCGAGISKGEDLKAAIELGSVGVLLASGIVKAKDPKAALEDLVSLI</sequence>
<organism>
    <name type="scientific">Methanococcoides burtonii (strain DSM 6242 / NBRC 107633 / OCM 468 / ACE-M)</name>
    <dbReference type="NCBI Taxonomy" id="259564"/>
    <lineage>
        <taxon>Archaea</taxon>
        <taxon>Methanobacteriati</taxon>
        <taxon>Methanobacteriota</taxon>
        <taxon>Stenosarchaea group</taxon>
        <taxon>Methanomicrobia</taxon>
        <taxon>Methanosarcinales</taxon>
        <taxon>Methanosarcinaceae</taxon>
        <taxon>Methanococcoides</taxon>
    </lineage>
</organism>